<sequence>GVPINVPCTGSPQCIKPCKDAGMRFGKCMNRKCHCTPK</sequence>
<dbReference type="PIR" id="C54471">
    <property type="entry name" value="C54471"/>
</dbReference>
<dbReference type="BMRB" id="P46112"/>
<dbReference type="SMR" id="P46112"/>
<dbReference type="GO" id="GO:0005576">
    <property type="term" value="C:extracellular region"/>
    <property type="evidence" value="ECO:0007669"/>
    <property type="project" value="UniProtKB-SubCell"/>
</dbReference>
<dbReference type="GO" id="GO:0008200">
    <property type="term" value="F:ion channel inhibitor activity"/>
    <property type="evidence" value="ECO:0007669"/>
    <property type="project" value="InterPro"/>
</dbReference>
<dbReference type="GO" id="GO:0015459">
    <property type="term" value="F:potassium channel regulator activity"/>
    <property type="evidence" value="ECO:0007669"/>
    <property type="project" value="UniProtKB-KW"/>
</dbReference>
<dbReference type="GO" id="GO:0090729">
    <property type="term" value="F:toxin activity"/>
    <property type="evidence" value="ECO:0007669"/>
    <property type="project" value="UniProtKB-KW"/>
</dbReference>
<dbReference type="FunFam" id="3.30.30.10:FF:000009">
    <property type="entry name" value="Potassium channel toxin alpha-KTx 4.3"/>
    <property type="match status" value="1"/>
</dbReference>
<dbReference type="Gene3D" id="3.30.30.10">
    <property type="entry name" value="Knottin, scorpion toxin-like"/>
    <property type="match status" value="1"/>
</dbReference>
<dbReference type="InterPro" id="IPR036574">
    <property type="entry name" value="Scorpion_toxin-like_sf"/>
</dbReference>
<dbReference type="InterPro" id="IPR001947">
    <property type="entry name" value="Scorpion_toxinS_K_inh"/>
</dbReference>
<dbReference type="Pfam" id="PF00451">
    <property type="entry name" value="Toxin_2"/>
    <property type="match status" value="1"/>
</dbReference>
<dbReference type="PRINTS" id="PR00286">
    <property type="entry name" value="CHARYBDTOXIN"/>
</dbReference>
<dbReference type="SUPFAM" id="SSF57095">
    <property type="entry name" value="Scorpion toxin-like"/>
    <property type="match status" value="1"/>
</dbReference>
<dbReference type="PROSITE" id="PS01138">
    <property type="entry name" value="SCORP_SHORT_TOXIN"/>
    <property type="match status" value="1"/>
</dbReference>
<comment type="function">
    <text>Potent inhibitor of shaker potassium channels as well as the mammalian homologs of shaker.</text>
</comment>
<comment type="subcellular location">
    <subcellularLocation>
        <location>Secreted</location>
    </subcellularLocation>
</comment>
<comment type="tissue specificity">
    <text>Expressed by the venom gland.</text>
</comment>
<comment type="domain">
    <text evidence="3">Has the structural arrangement of an alpha-helix connected to antiparallel beta-sheets by disulfide bonds (CS-alpha/beta).</text>
</comment>
<comment type="similarity">
    <text evidence="3">Belongs to the short scorpion toxin superfamily. Potassium channel inhibitor family. Alpha-KTx 03 subfamily.</text>
</comment>
<accession>P46112</accession>
<organism>
    <name type="scientific">Leiurus hebraeus</name>
    <name type="common">Hebrew deathstalker scorpion</name>
    <name type="synonym">Leiurus quinquestriatus hebraeus</name>
    <dbReference type="NCBI Taxonomy" id="2899558"/>
    <lineage>
        <taxon>Eukaryota</taxon>
        <taxon>Metazoa</taxon>
        <taxon>Ecdysozoa</taxon>
        <taxon>Arthropoda</taxon>
        <taxon>Chelicerata</taxon>
        <taxon>Arachnida</taxon>
        <taxon>Scorpiones</taxon>
        <taxon>Buthida</taxon>
        <taxon>Buthoidea</taxon>
        <taxon>Buthidae</taxon>
        <taxon>Leiurus</taxon>
    </lineage>
</organism>
<evidence type="ECO:0000250" key="1"/>
<evidence type="ECO:0000255" key="2"/>
<evidence type="ECO:0000305" key="3"/>
<protein>
    <recommendedName>
        <fullName>Potassium channel toxin alpha-KTx 3.3</fullName>
    </recommendedName>
    <alternativeName>
        <fullName>Agitoxin-3</fullName>
        <shortName>AgTx-3</shortName>
        <shortName>AgTx3</shortName>
    </alternativeName>
</protein>
<name>KAX33_LEIHE</name>
<keyword id="KW-0903">Direct protein sequencing</keyword>
<keyword id="KW-1015">Disulfide bond</keyword>
<keyword id="KW-0872">Ion channel impairing toxin</keyword>
<keyword id="KW-0528">Neurotoxin</keyword>
<keyword id="KW-0632">Potassium channel impairing toxin</keyword>
<keyword id="KW-0964">Secreted</keyword>
<keyword id="KW-0800">Toxin</keyword>
<feature type="peptide" id="PRO_0000044927" description="Potassium channel toxin alpha-KTx 3.3">
    <location>
        <begin position="1"/>
        <end position="38"/>
    </location>
</feature>
<feature type="region of interest" description="Interaction with Ca(2+)-activated K(+) channels" evidence="2">
    <location>
        <begin position="26"/>
        <end position="33"/>
    </location>
</feature>
<feature type="disulfide bond" evidence="1">
    <location>
        <begin position="8"/>
        <end position="28"/>
    </location>
</feature>
<feature type="disulfide bond" evidence="1">
    <location>
        <begin position="14"/>
        <end position="33"/>
    </location>
</feature>
<feature type="disulfide bond" evidence="1">
    <location>
        <begin position="18"/>
        <end position="35"/>
    </location>
</feature>
<proteinExistence type="evidence at protein level"/>
<reference key="1">
    <citation type="journal article" date="1994" name="Biochemistry">
        <title>Purification and characterization of three inhibitors of voltage-dependent K+ channels from Leiurus quinquestriatus var. hebraeus venom.</title>
        <authorList>
            <person name="Garcia M.L."/>
            <person name="Garcia-Calvo M."/>
            <person name="Hidalgo P."/>
            <person name="Lee A."/>
            <person name="Mackinnon R."/>
        </authorList>
    </citation>
    <scope>PROTEIN SEQUENCE</scope>
    <source>
        <tissue>Venom</tissue>
    </source>
</reference>
<reference key="2">
    <citation type="journal article" date="2006" name="Toxicon">
        <title>Moving pieces in a taxonomic puzzle: venom 2D-LC/MS and data clustering analyses to infer phylogenetic relationships in some scorpions from the Buthidae family (Scorpiones).</title>
        <authorList>
            <person name="Nascimento D.G."/>
            <person name="Rates B."/>
            <person name="Santos D.M."/>
            <person name="Verano-Braga T."/>
            <person name="Barbosa-Silva A."/>
            <person name="Dutra A.A.A."/>
            <person name="Biondi I."/>
            <person name="Martin-Eauclaire M.-F."/>
            <person name="De Lima M.E."/>
            <person name="Pimenta A.M.C."/>
        </authorList>
    </citation>
    <scope>IDENTIFICATION BY MASS SPECTROMETRY</scope>
</reference>